<evidence type="ECO:0000250" key="1"/>
<evidence type="ECO:0000255" key="2"/>
<evidence type="ECO:0000305" key="3"/>
<accession>Q01994</accession>
<organism>
    <name type="scientific">Photobacterium leiognathi</name>
    <dbReference type="NCBI Taxonomy" id="553611"/>
    <lineage>
        <taxon>Bacteria</taxon>
        <taxon>Pseudomonadati</taxon>
        <taxon>Pseudomonadota</taxon>
        <taxon>Gammaproteobacteria</taxon>
        <taxon>Vibrionales</taxon>
        <taxon>Vibrionaceae</taxon>
        <taxon>Photobacterium</taxon>
    </lineage>
</organism>
<feature type="chain" id="PRO_0000134779" description="6,7-dimethyl-8-ribityllumazine synthase">
    <location>
        <begin position="1"/>
        <end position="144" status="greater than"/>
    </location>
</feature>
<feature type="active site" description="Proton donor" evidence="2">
    <location>
        <position position="88"/>
    </location>
</feature>
<feature type="binding site" evidence="1">
    <location>
        <position position="21"/>
    </location>
    <ligand>
        <name>5-amino-6-(D-ribitylamino)uracil</name>
        <dbReference type="ChEBI" id="CHEBI:15934"/>
    </ligand>
</feature>
<feature type="binding site" evidence="1">
    <location>
        <begin position="56"/>
        <end position="58"/>
    </location>
    <ligand>
        <name>5-amino-6-(D-ribitylamino)uracil</name>
        <dbReference type="ChEBI" id="CHEBI:15934"/>
    </ligand>
</feature>
<feature type="binding site" evidence="1">
    <location>
        <begin position="80"/>
        <end position="82"/>
    </location>
    <ligand>
        <name>5-amino-6-(D-ribitylamino)uracil</name>
        <dbReference type="ChEBI" id="CHEBI:15934"/>
    </ligand>
</feature>
<feature type="binding site" evidence="1">
    <location>
        <begin position="85"/>
        <end position="86"/>
    </location>
    <ligand>
        <name>(2S)-2-hydroxy-3-oxobutyl phosphate</name>
        <dbReference type="ChEBI" id="CHEBI:58830"/>
    </ligand>
</feature>
<feature type="binding site" evidence="1">
    <location>
        <position position="113"/>
    </location>
    <ligand>
        <name>5-amino-6-(D-ribitylamino)uracil</name>
        <dbReference type="ChEBI" id="CHEBI:15934"/>
    </ligand>
</feature>
<feature type="binding site" evidence="1">
    <location>
        <position position="127"/>
    </location>
    <ligand>
        <name>(2S)-2-hydroxy-3-oxobutyl phosphate</name>
        <dbReference type="ChEBI" id="CHEBI:58830"/>
    </ligand>
</feature>
<feature type="non-terminal residue">
    <location>
        <position position="144"/>
    </location>
</feature>
<proteinExistence type="inferred from homology"/>
<gene>
    <name type="primary">ribH</name>
</gene>
<dbReference type="EC" id="2.5.1.78"/>
<dbReference type="EMBL" id="M90094">
    <property type="protein sequence ID" value="AAA73230.1"/>
    <property type="molecule type" value="Genomic_DNA"/>
</dbReference>
<dbReference type="PIR" id="PC1110">
    <property type="entry name" value="PC1110"/>
</dbReference>
<dbReference type="SMR" id="Q01994"/>
<dbReference type="BRENDA" id="2.5.1.78">
    <property type="organism ID" value="4778"/>
</dbReference>
<dbReference type="UniPathway" id="UPA00275">
    <property type="reaction ID" value="UER00404"/>
</dbReference>
<dbReference type="GO" id="GO:0005829">
    <property type="term" value="C:cytosol"/>
    <property type="evidence" value="ECO:0007669"/>
    <property type="project" value="TreeGrafter"/>
</dbReference>
<dbReference type="GO" id="GO:0009349">
    <property type="term" value="C:riboflavin synthase complex"/>
    <property type="evidence" value="ECO:0007669"/>
    <property type="project" value="InterPro"/>
</dbReference>
<dbReference type="GO" id="GO:0000906">
    <property type="term" value="F:6,7-dimethyl-8-ribityllumazine synthase activity"/>
    <property type="evidence" value="ECO:0007669"/>
    <property type="project" value="UniProtKB-EC"/>
</dbReference>
<dbReference type="GO" id="GO:0009231">
    <property type="term" value="P:riboflavin biosynthetic process"/>
    <property type="evidence" value="ECO:0007669"/>
    <property type="project" value="UniProtKB-UniPathway"/>
</dbReference>
<dbReference type="CDD" id="cd09209">
    <property type="entry name" value="Lumazine_synthase-I"/>
    <property type="match status" value="1"/>
</dbReference>
<dbReference type="FunFam" id="3.40.50.960:FF:000001">
    <property type="entry name" value="6,7-dimethyl-8-ribityllumazine synthase"/>
    <property type="match status" value="1"/>
</dbReference>
<dbReference type="Gene3D" id="3.40.50.960">
    <property type="entry name" value="Lumazine/riboflavin synthase"/>
    <property type="match status" value="1"/>
</dbReference>
<dbReference type="HAMAP" id="MF_00178">
    <property type="entry name" value="Lumazine_synth"/>
    <property type="match status" value="1"/>
</dbReference>
<dbReference type="InterPro" id="IPR034964">
    <property type="entry name" value="LS"/>
</dbReference>
<dbReference type="InterPro" id="IPR002180">
    <property type="entry name" value="LS/RS"/>
</dbReference>
<dbReference type="InterPro" id="IPR036467">
    <property type="entry name" value="LS/RS_sf"/>
</dbReference>
<dbReference type="NCBIfam" id="TIGR00114">
    <property type="entry name" value="lumazine-synth"/>
    <property type="match status" value="1"/>
</dbReference>
<dbReference type="NCBIfam" id="NF000812">
    <property type="entry name" value="PRK00061.1-4"/>
    <property type="match status" value="1"/>
</dbReference>
<dbReference type="PANTHER" id="PTHR21058:SF0">
    <property type="entry name" value="6,7-DIMETHYL-8-RIBITYLLUMAZINE SYNTHASE"/>
    <property type="match status" value="1"/>
</dbReference>
<dbReference type="PANTHER" id="PTHR21058">
    <property type="entry name" value="6,7-DIMETHYL-8-RIBITYLLUMAZINE SYNTHASE DMRL SYNTHASE LUMAZINE SYNTHASE"/>
    <property type="match status" value="1"/>
</dbReference>
<dbReference type="Pfam" id="PF00885">
    <property type="entry name" value="DMRL_synthase"/>
    <property type="match status" value="1"/>
</dbReference>
<dbReference type="SUPFAM" id="SSF52121">
    <property type="entry name" value="Lumazine synthase"/>
    <property type="match status" value="1"/>
</dbReference>
<keyword id="KW-0686">Riboflavin biosynthesis</keyword>
<keyword id="KW-0808">Transferase</keyword>
<protein>
    <recommendedName>
        <fullName>6,7-dimethyl-8-ribityllumazine synthase</fullName>
        <shortName>DMRL synthase</shortName>
        <shortName>LS</shortName>
        <shortName>Lumazine synthase</shortName>
        <ecNumber>2.5.1.78</ecNumber>
    </recommendedName>
</protein>
<sequence>MKLLKGVDCTSCCIAIVIARFNSFINENLLSGAINALQRKGQVKAENITVIRCPGAYELPLAAQQIAKQGNYDAIIAIGAVIRGGTPHFDFVAGECNKGLAQVALEYQTPVAFGVLTVDSIEQAIERAGTKMGNKGEEAALSAL</sequence>
<name>RISBA_PHOLE</name>
<reference key="1">
    <citation type="journal article" date="1992" name="Biochem. Biophys. Res. Commun.">
        <title>The lux genes in Photobacterium leiognathi are closely linked with genes corresponding in sequence to riboflavin synthesis genes.</title>
        <authorList>
            <person name="Lee C.Y."/>
            <person name="Meighen E.A."/>
        </authorList>
    </citation>
    <scope>NUCLEOTIDE SEQUENCE [GENOMIC DNA]</scope>
    <source>
        <strain>ATCC 25521 / DSM 21260 / CCUG 16229 / CIP 66.5 / NCIMB 2193 / L1</strain>
    </source>
</reference>
<comment type="function">
    <text evidence="1">Catalyzes the formation of 6,7-dimethyl-8-ribityllumazine by condensation of 5-amino-6-(D-ribitylamino)uracil with 3,4-dihydroxy-2-butanone 4-phosphate. This is the penultimate step in the biosynthesis of riboflavin (By similarity).</text>
</comment>
<comment type="catalytic activity">
    <reaction>
        <text>(2S)-2-hydroxy-3-oxobutyl phosphate + 5-amino-6-(D-ribitylamino)uracil = 6,7-dimethyl-8-(1-D-ribityl)lumazine + phosphate + 2 H2O + H(+)</text>
        <dbReference type="Rhea" id="RHEA:26152"/>
        <dbReference type="ChEBI" id="CHEBI:15377"/>
        <dbReference type="ChEBI" id="CHEBI:15378"/>
        <dbReference type="ChEBI" id="CHEBI:15934"/>
        <dbReference type="ChEBI" id="CHEBI:43474"/>
        <dbReference type="ChEBI" id="CHEBI:58201"/>
        <dbReference type="ChEBI" id="CHEBI:58830"/>
        <dbReference type="EC" id="2.5.1.78"/>
    </reaction>
</comment>
<comment type="pathway">
    <text>Cofactor biosynthesis; riboflavin biosynthesis; riboflavin from 2-hydroxy-3-oxobutyl phosphate and 5-amino-6-(D-ribitylamino)uracil: step 1/2.</text>
</comment>
<comment type="subunit">
    <text evidence="1">Forms an icosahedral capsid composed of 60 subunits, arranged as a dodecamer of pentamers.</text>
</comment>
<comment type="similarity">
    <text evidence="3">Belongs to the DMRL synthase family.</text>
</comment>